<evidence type="ECO:0000255" key="1"/>
<evidence type="ECO:0000255" key="2">
    <source>
        <dbReference type="PROSITE-ProRule" id="PRU00196"/>
    </source>
</evidence>
<evidence type="ECO:0000256" key="3">
    <source>
        <dbReference type="SAM" id="MobiDB-lite"/>
    </source>
</evidence>
<evidence type="ECO:0000269" key="4">
    <source>
    </source>
</evidence>
<evidence type="ECO:0000269" key="5">
    <source>
    </source>
</evidence>
<evidence type="ECO:0000269" key="6">
    <source>
    </source>
</evidence>
<evidence type="ECO:0000269" key="7">
    <source>
    </source>
</evidence>
<evidence type="ECO:0000269" key="8">
    <source>
    </source>
</evidence>
<evidence type="ECO:0000269" key="9">
    <source>
    </source>
</evidence>
<evidence type="ECO:0000269" key="10">
    <source>
    </source>
</evidence>
<evidence type="ECO:0000303" key="11">
    <source>
    </source>
</evidence>
<evidence type="ECO:0000303" key="12">
    <source>
    </source>
</evidence>
<evidence type="ECO:0000303" key="13">
    <source>
    </source>
</evidence>
<evidence type="ECO:0000305" key="14"/>
<evidence type="ECO:0007829" key="15">
    <source>
        <dbReference type="PDB" id="6K0O"/>
    </source>
</evidence>
<gene>
    <name type="primary">CD163L1</name>
    <name type="synonym">CD163B</name>
    <name type="synonym">M160</name>
    <name type="ORF">UNQ6434/PRO23202</name>
</gene>
<comment type="subcellular location">
    <molecule>Isoform 1</molecule>
    <subcellularLocation>
        <location evidence="14">Cell membrane</location>
        <topology evidence="14">Single-pass type I membrane protein</topology>
    </subcellularLocation>
</comment>
<comment type="subcellular location">
    <molecule>Isoform 2</molecule>
    <subcellularLocation>
        <location evidence="14">Cell membrane</location>
        <topology evidence="14">Single-pass type I membrane protein</topology>
    </subcellularLocation>
</comment>
<comment type="subcellular location">
    <molecule>Isoform 3</molecule>
    <subcellularLocation>
        <location evidence="14">Secreted</location>
    </subcellularLocation>
</comment>
<comment type="alternative products">
    <event type="alternative splicing"/>
    <isoform>
        <id>Q9NR16-1</id>
        <name>1</name>
        <name>M160-alpha</name>
        <sequence type="displayed"/>
    </isoform>
    <isoform>
        <id>Q9NR16-2</id>
        <name>2</name>
        <name>M160-beta</name>
        <sequence type="described" ref="VSP_016877"/>
    </isoform>
    <isoform>
        <id>Q9NR16-3</id>
        <name>3</name>
        <sequence type="described" ref="VSP_016875 VSP_016876"/>
    </isoform>
    <isoform>
        <id>Q9NR16-4</id>
        <name>4</name>
        <sequence type="described" ref="VSP_047557"/>
    </isoform>
</comment>
<comment type="tissue specificity">
    <text evidence="4">Isoform 1 is highly expressed in the spleen, lymph nodes, thymus, and fetal liver and weakly expressed in bone marrow and no expression was found in peripheral blood leukocytes. Isoform 1 expression is restricted to the monocyte and macrophage cell lines. Isoform 2 is only expressed in spleen.</text>
</comment>
<accession>Q9NR16</accession>
<accession>B4E0G7</accession>
<accession>C9JHR7</accession>
<accession>E7EVK4</accession>
<accession>Q2M3B7</accession>
<accession>Q6UWC2</accession>
<organism>
    <name type="scientific">Homo sapiens</name>
    <name type="common">Human</name>
    <dbReference type="NCBI Taxonomy" id="9606"/>
    <lineage>
        <taxon>Eukaryota</taxon>
        <taxon>Metazoa</taxon>
        <taxon>Chordata</taxon>
        <taxon>Craniata</taxon>
        <taxon>Vertebrata</taxon>
        <taxon>Euteleostomi</taxon>
        <taxon>Mammalia</taxon>
        <taxon>Eutheria</taxon>
        <taxon>Euarchontoglires</taxon>
        <taxon>Primates</taxon>
        <taxon>Haplorrhini</taxon>
        <taxon>Catarrhini</taxon>
        <taxon>Hominidae</taxon>
        <taxon>Homo</taxon>
    </lineage>
</organism>
<feature type="signal peptide" evidence="7">
    <location>
        <begin position="1"/>
        <end position="40"/>
    </location>
</feature>
<feature type="chain" id="PRO_0000045392" description="Scavenger receptor cysteine-rich type 1 protein M160">
    <location>
        <begin position="41"/>
        <end position="1453"/>
    </location>
</feature>
<feature type="topological domain" description="Extracellular" evidence="1">
    <location>
        <begin position="41"/>
        <end position="1359"/>
    </location>
</feature>
<feature type="transmembrane region" description="Helical" evidence="1">
    <location>
        <begin position="1360"/>
        <end position="1380"/>
    </location>
</feature>
<feature type="topological domain" description="Cytoplasmic" evidence="1">
    <location>
        <begin position="1381"/>
        <end position="1453"/>
    </location>
</feature>
<feature type="domain" description="SRCR 1" evidence="2">
    <location>
        <begin position="48"/>
        <end position="148"/>
    </location>
</feature>
<feature type="domain" description="SRCR 2" evidence="2">
    <location>
        <begin position="155"/>
        <end position="255"/>
    </location>
</feature>
<feature type="domain" description="SRCR 3" evidence="2">
    <location>
        <begin position="262"/>
        <end position="362"/>
    </location>
</feature>
<feature type="domain" description="SRCR 4" evidence="2">
    <location>
        <begin position="369"/>
        <end position="469"/>
    </location>
</feature>
<feature type="domain" description="SRCR 5" evidence="2">
    <location>
        <begin position="476"/>
        <end position="576"/>
    </location>
</feature>
<feature type="domain" description="SRCR 6" evidence="2">
    <location>
        <begin position="583"/>
        <end position="683"/>
    </location>
</feature>
<feature type="domain" description="SRCR 7" evidence="2">
    <location>
        <begin position="690"/>
        <end position="790"/>
    </location>
</feature>
<feature type="domain" description="SRCR 8" evidence="2">
    <location>
        <begin position="795"/>
        <end position="895"/>
    </location>
</feature>
<feature type="domain" description="SRCR 9" evidence="2">
    <location>
        <begin position="900"/>
        <end position="1000"/>
    </location>
</feature>
<feature type="domain" description="SRCR 10" evidence="2">
    <location>
        <begin position="1036"/>
        <end position="1136"/>
    </location>
</feature>
<feature type="domain" description="SRCR 11" evidence="2">
    <location>
        <begin position="1141"/>
        <end position="1243"/>
    </location>
</feature>
<feature type="domain" description="SRCR 12" evidence="2">
    <location>
        <begin position="1246"/>
        <end position="1346"/>
    </location>
</feature>
<feature type="region of interest" description="Disordered" evidence="3">
    <location>
        <begin position="1418"/>
        <end position="1453"/>
    </location>
</feature>
<feature type="compositionally biased region" description="Basic and acidic residues" evidence="3">
    <location>
        <begin position="1418"/>
        <end position="1435"/>
    </location>
</feature>
<feature type="glycosylation site" description="N-linked (GlcNAc...) asparagine" evidence="1">
    <location>
        <position position="42"/>
    </location>
</feature>
<feature type="glycosylation site" description="N-linked (GlcNAc...) asparagine" evidence="1">
    <location>
        <position position="78"/>
    </location>
</feature>
<feature type="glycosylation site" description="N-linked (GlcNAc...) asparagine" evidence="1">
    <location>
        <position position="120"/>
    </location>
</feature>
<feature type="glycosylation site" description="N-linked (GlcNAc...) asparagine" evidence="1">
    <location>
        <position position="161"/>
    </location>
</feature>
<feature type="glycosylation site" description="N-linked (GlcNAc...) asparagine" evidence="1">
    <location>
        <position position="334"/>
    </location>
</feature>
<feature type="glycosylation site" description="N-linked (GlcNAc...) asparagine" evidence="1">
    <location>
        <position position="377"/>
    </location>
</feature>
<feature type="glycosylation site" description="N-linked (GlcNAc...) asparagine" evidence="1">
    <location>
        <position position="441"/>
    </location>
</feature>
<feature type="glycosylation site" description="N-linked (GlcNAc...) asparagine" evidence="1">
    <location>
        <position position="548"/>
    </location>
</feature>
<feature type="glycosylation site" description="N-linked (GlcNAc...) asparagine" evidence="1">
    <location>
        <position position="637"/>
    </location>
</feature>
<feature type="glycosylation site" description="N-linked (GlcNAc...) asparagine" evidence="1">
    <location>
        <position position="972"/>
    </location>
</feature>
<feature type="glycosylation site" description="N-linked (GlcNAc...) asparagine" evidence="1">
    <location>
        <position position="1013"/>
    </location>
</feature>
<feature type="glycosylation site" description="N-linked (GlcNAc...) asparagine" evidence="1">
    <location>
        <position position="1084"/>
    </location>
</feature>
<feature type="glycosylation site" description="N-linked (GlcNAc...) asparagine" evidence="1">
    <location>
        <position position="1104"/>
    </location>
</feature>
<feature type="glycosylation site" description="N-linked (GlcNAc...) asparagine" evidence="9">
    <location>
        <position position="1161"/>
    </location>
</feature>
<feature type="glycosylation site" description="N-linked (GlcNAc...) asparagine" evidence="1">
    <location>
        <position position="1171"/>
    </location>
</feature>
<feature type="glycosylation site" description="N-linked (GlcNAc...) asparagine" evidence="1">
    <location>
        <position position="1318"/>
    </location>
</feature>
<feature type="glycosylation site" description="N-linked (GlcNAc...) asparagine" evidence="1">
    <location>
        <position position="1354"/>
    </location>
</feature>
<feature type="disulfide bond" evidence="2">
    <location>
        <begin position="73"/>
        <end position="137"/>
    </location>
</feature>
<feature type="disulfide bond" evidence="2">
    <location>
        <begin position="86"/>
        <end position="147"/>
    </location>
</feature>
<feature type="disulfide bond" evidence="2">
    <location>
        <begin position="117"/>
        <end position="127"/>
    </location>
</feature>
<feature type="disulfide bond" evidence="2">
    <location>
        <begin position="180"/>
        <end position="244"/>
    </location>
</feature>
<feature type="disulfide bond" evidence="2">
    <location>
        <begin position="193"/>
        <end position="254"/>
    </location>
</feature>
<feature type="disulfide bond" evidence="2">
    <location>
        <begin position="224"/>
        <end position="234"/>
    </location>
</feature>
<feature type="disulfide bond" evidence="2">
    <location>
        <begin position="287"/>
        <end position="351"/>
    </location>
</feature>
<feature type="disulfide bond" evidence="2">
    <location>
        <begin position="300"/>
        <end position="361"/>
    </location>
</feature>
<feature type="disulfide bond" evidence="2">
    <location>
        <begin position="331"/>
        <end position="341"/>
    </location>
</feature>
<feature type="disulfide bond" evidence="2">
    <location>
        <begin position="394"/>
        <end position="458"/>
    </location>
</feature>
<feature type="disulfide bond" evidence="2">
    <location>
        <begin position="407"/>
        <end position="468"/>
    </location>
</feature>
<feature type="disulfide bond" evidence="2">
    <location>
        <begin position="438"/>
        <end position="448"/>
    </location>
</feature>
<feature type="disulfide bond" evidence="2">
    <location>
        <begin position="501"/>
        <end position="565"/>
    </location>
</feature>
<feature type="disulfide bond" evidence="2">
    <location>
        <begin position="514"/>
        <end position="575"/>
    </location>
</feature>
<feature type="disulfide bond" evidence="2">
    <location>
        <begin position="545"/>
        <end position="555"/>
    </location>
</feature>
<feature type="disulfide bond" evidence="2">
    <location>
        <begin position="608"/>
        <end position="672"/>
    </location>
</feature>
<feature type="disulfide bond" evidence="2">
    <location>
        <begin position="621"/>
        <end position="682"/>
    </location>
</feature>
<feature type="disulfide bond" evidence="2">
    <location>
        <begin position="652"/>
        <end position="662"/>
    </location>
</feature>
<feature type="disulfide bond" evidence="2">
    <location>
        <begin position="715"/>
        <end position="779"/>
    </location>
</feature>
<feature type="disulfide bond" evidence="2">
    <location>
        <begin position="728"/>
        <end position="789"/>
    </location>
</feature>
<feature type="disulfide bond" evidence="2">
    <location>
        <begin position="759"/>
        <end position="769"/>
    </location>
</feature>
<feature type="disulfide bond" evidence="2">
    <location>
        <begin position="820"/>
        <end position="884"/>
    </location>
</feature>
<feature type="disulfide bond" evidence="2">
    <location>
        <begin position="833"/>
        <end position="894"/>
    </location>
</feature>
<feature type="disulfide bond" evidence="2">
    <location>
        <begin position="864"/>
        <end position="874"/>
    </location>
</feature>
<feature type="disulfide bond" evidence="2">
    <location>
        <begin position="925"/>
        <end position="989"/>
    </location>
</feature>
<feature type="disulfide bond" evidence="2">
    <location>
        <begin position="938"/>
        <end position="999"/>
    </location>
</feature>
<feature type="disulfide bond" evidence="2">
    <location>
        <begin position="969"/>
        <end position="979"/>
    </location>
</feature>
<feature type="disulfide bond" evidence="2">
    <location>
        <begin position="1061"/>
        <end position="1125"/>
    </location>
</feature>
<feature type="disulfide bond" evidence="2">
    <location>
        <begin position="1074"/>
        <end position="1135"/>
    </location>
</feature>
<feature type="disulfide bond" evidence="2">
    <location>
        <begin position="1105"/>
        <end position="1115"/>
    </location>
</feature>
<feature type="disulfide bond" evidence="2">
    <location>
        <begin position="1181"/>
        <end position="1242"/>
    </location>
</feature>
<feature type="disulfide bond" evidence="2">
    <location>
        <begin position="1212"/>
        <end position="1222"/>
    </location>
</feature>
<feature type="disulfide bond" evidence="2">
    <location>
        <begin position="1271"/>
        <end position="1335"/>
    </location>
</feature>
<feature type="disulfide bond" evidence="2">
    <location>
        <begin position="1284"/>
        <end position="1345"/>
    </location>
</feature>
<feature type="disulfide bond" evidence="2">
    <location>
        <begin position="1315"/>
        <end position="1325"/>
    </location>
</feature>
<feature type="splice variant" id="VSP_047557" description="In isoform 4." evidence="13">
    <original>Y</original>
    <variation>YGKSLTRVGRQ</variation>
    <location>
        <position position="148"/>
    </location>
</feature>
<feature type="splice variant" id="VSP_016875" description="In isoform 3." evidence="12">
    <original>GWGMNIAEVV</original>
    <variation>SFLMTSSKPR</variation>
    <location>
        <begin position="718"/>
        <end position="727"/>
    </location>
</feature>
<feature type="splice variant" id="VSP_016876" description="In isoform 3." evidence="12">
    <location>
        <begin position="728"/>
        <end position="1453"/>
    </location>
</feature>
<feature type="splice variant" id="VSP_016877" description="In isoform 2." evidence="11">
    <location>
        <begin position="1395"/>
        <end position="1426"/>
    </location>
</feature>
<feature type="sequence variant" id="VAR_059810" description="In dbSNP:rs6488268." evidence="4 5 6 8 10">
    <original>L</original>
    <variation>M</variation>
    <location>
        <position position="523"/>
    </location>
</feature>
<feature type="sequence variant" id="VAR_057206" description="In dbSNP:rs4072797.">
    <original>D</original>
    <variation>N</variation>
    <location>
        <position position="578"/>
    </location>
</feature>
<feature type="sequence variant" id="VAR_057207" description="In dbSNP:rs4072796.">
    <original>G</original>
    <variation>A</variation>
    <location>
        <position position="582"/>
    </location>
</feature>
<feature type="sequence variant" id="VAR_057208" description="In dbSNP:rs36206713.">
    <original>G</original>
    <variation>S</variation>
    <location>
        <position position="1055"/>
    </location>
</feature>
<feature type="sequence variant" id="VAR_057209" description="In dbSNP:rs35480970.">
    <original>M</original>
    <variation>T</variation>
    <location>
        <position position="1108"/>
    </location>
</feature>
<feature type="sequence conflict" description="In Ref. 4; BAG64429." evidence="14" ref="4">
    <original>T</original>
    <variation>S</variation>
    <location>
        <position position="105"/>
    </location>
</feature>
<feature type="sequence conflict" description="In Ref. 4; BAG64429." evidence="14" ref="4">
    <original>G</original>
    <variation>V</variation>
    <location>
        <position position="333"/>
    </location>
</feature>
<feature type="sequence conflict" description="In Ref. 1; AAF91396 and 3; AAQ89215." evidence="14" ref="1 3">
    <original>P</original>
    <variation>T</variation>
    <location>
        <position position="1234"/>
    </location>
</feature>
<feature type="sequence conflict" description="In Ref. 1; AAF91396 and 3; AAQ89215." evidence="14" ref="1 3">
    <original>H</original>
    <variation>R</variation>
    <location>
        <position position="1359"/>
    </location>
</feature>
<feature type="sequence conflict" description="In Ref. 1; AAF91396 and 3; AAQ89215." evidence="14" ref="1 3">
    <original>L</original>
    <variation>P</variation>
    <location>
        <position position="1373"/>
    </location>
</feature>
<feature type="strand" evidence="15">
    <location>
        <begin position="795"/>
        <end position="799"/>
    </location>
</feature>
<feature type="strand" evidence="15">
    <location>
        <begin position="805"/>
        <end position="812"/>
    </location>
</feature>
<feature type="strand" evidence="15">
    <location>
        <begin position="815"/>
        <end position="818"/>
    </location>
</feature>
<feature type="helix" evidence="15">
    <location>
        <begin position="826"/>
        <end position="835"/>
    </location>
</feature>
<feature type="strand" evidence="15">
    <location>
        <begin position="840"/>
        <end position="845"/>
    </location>
</feature>
<feature type="turn" evidence="15">
    <location>
        <begin position="847"/>
        <end position="850"/>
    </location>
</feature>
<feature type="strand" evidence="15">
    <location>
        <begin position="855"/>
        <end position="857"/>
    </location>
</feature>
<feature type="strand" evidence="15">
    <location>
        <begin position="859"/>
        <end position="862"/>
    </location>
</feature>
<feature type="helix" evidence="15">
    <location>
        <begin position="871"/>
        <end position="873"/>
    </location>
</feature>
<feature type="strand" evidence="15">
    <location>
        <begin position="876"/>
        <end position="878"/>
    </location>
</feature>
<feature type="helix" evidence="15">
    <location>
        <begin position="886"/>
        <end position="888"/>
    </location>
</feature>
<feature type="strand" evidence="15">
    <location>
        <begin position="891"/>
        <end position="894"/>
    </location>
</feature>
<protein>
    <recommendedName>
        <fullName>Scavenger receptor cysteine-rich type 1 protein M160</fullName>
    </recommendedName>
    <alternativeName>
        <fullName>CD163 antigen-like 1</fullName>
    </alternativeName>
    <cdAntigenName>CD163b</cdAntigenName>
</protein>
<keyword id="KW-0002">3D-structure</keyword>
<keyword id="KW-0025">Alternative splicing</keyword>
<keyword id="KW-1003">Cell membrane</keyword>
<keyword id="KW-0903">Direct protein sequencing</keyword>
<keyword id="KW-1015">Disulfide bond</keyword>
<keyword id="KW-0325">Glycoprotein</keyword>
<keyword id="KW-0472">Membrane</keyword>
<keyword id="KW-1267">Proteomics identification</keyword>
<keyword id="KW-1185">Reference proteome</keyword>
<keyword id="KW-0677">Repeat</keyword>
<keyword id="KW-0964">Secreted</keyword>
<keyword id="KW-0732">Signal</keyword>
<keyword id="KW-0812">Transmembrane</keyword>
<keyword id="KW-1133">Transmembrane helix</keyword>
<name>C163B_HUMAN</name>
<proteinExistence type="evidence at protein level"/>
<reference key="1">
    <citation type="journal article" date="2000" name="J. Immunol.">
        <title>Cloning of a novel scavenger receptor cysteine-rich type I transmembrane molecule (M160) expressed by human macrophages.</title>
        <authorList>
            <person name="Groenlund J."/>
            <person name="Vitved L."/>
            <person name="Lausen M."/>
            <person name="Skjoedt K."/>
            <person name="Holmskov U."/>
        </authorList>
    </citation>
    <scope>NUCLEOTIDE SEQUENCE [MRNA] (ISOFORMS 1 AND 2)</scope>
    <scope>TISSUE SPECIFICITY</scope>
    <scope>VARIANT MET-523</scope>
</reference>
<reference key="2">
    <citation type="journal article" date="2010" name="J. Virol.">
        <title>Identification of the CD163 protein domains involved in infection of the porcine reproductive and respiratory syndrome virus.</title>
        <authorList>
            <person name="Van Gorp H."/>
            <person name="Van Breedam W."/>
            <person name="Van Doorsselaere J."/>
            <person name="Delputte P.L."/>
            <person name="Nauwynck H.J."/>
        </authorList>
    </citation>
    <scope>NUCLEOTIDE SEQUENCE [MRNA] (ISOFORM 1)</scope>
    <scope>VARIANT MET-523</scope>
</reference>
<reference key="3">
    <citation type="journal article" date="2003" name="Genome Res.">
        <title>The secreted protein discovery initiative (SPDI), a large-scale effort to identify novel human secreted and transmembrane proteins: a bioinformatics assessment.</title>
        <authorList>
            <person name="Clark H.F."/>
            <person name="Gurney A.L."/>
            <person name="Abaya E."/>
            <person name="Baker K."/>
            <person name="Baldwin D.T."/>
            <person name="Brush J."/>
            <person name="Chen J."/>
            <person name="Chow B."/>
            <person name="Chui C."/>
            <person name="Crowley C."/>
            <person name="Currell B."/>
            <person name="Deuel B."/>
            <person name="Dowd P."/>
            <person name="Eaton D."/>
            <person name="Foster J.S."/>
            <person name="Grimaldi C."/>
            <person name="Gu Q."/>
            <person name="Hass P.E."/>
            <person name="Heldens S."/>
            <person name="Huang A."/>
            <person name="Kim H.S."/>
            <person name="Klimowski L."/>
            <person name="Jin Y."/>
            <person name="Johnson S."/>
            <person name="Lee J."/>
            <person name="Lewis L."/>
            <person name="Liao D."/>
            <person name="Mark M.R."/>
            <person name="Robbie E."/>
            <person name="Sanchez C."/>
            <person name="Schoenfeld J."/>
            <person name="Seshagiri S."/>
            <person name="Simmons L."/>
            <person name="Singh J."/>
            <person name="Smith V."/>
            <person name="Stinson J."/>
            <person name="Vagts A."/>
            <person name="Vandlen R.L."/>
            <person name="Watanabe C."/>
            <person name="Wieand D."/>
            <person name="Woods K."/>
            <person name="Xie M.-H."/>
            <person name="Yansura D.G."/>
            <person name="Yi S."/>
            <person name="Yu G."/>
            <person name="Yuan J."/>
            <person name="Zhang M."/>
            <person name="Zhang Z."/>
            <person name="Goddard A.D."/>
            <person name="Wood W.I."/>
            <person name="Godowski P.J."/>
            <person name="Gray A.M."/>
        </authorList>
    </citation>
    <scope>NUCLEOTIDE SEQUENCE [LARGE SCALE MRNA] (ISOFORM 3)</scope>
    <scope>VARIANT MET-523</scope>
</reference>
<reference key="4">
    <citation type="journal article" date="2004" name="Nat. Genet.">
        <title>Complete sequencing and characterization of 21,243 full-length human cDNAs.</title>
        <authorList>
            <person name="Ota T."/>
            <person name="Suzuki Y."/>
            <person name="Nishikawa T."/>
            <person name="Otsuki T."/>
            <person name="Sugiyama T."/>
            <person name="Irie R."/>
            <person name="Wakamatsu A."/>
            <person name="Hayashi K."/>
            <person name="Sato H."/>
            <person name="Nagai K."/>
            <person name="Kimura K."/>
            <person name="Makita H."/>
            <person name="Sekine M."/>
            <person name="Obayashi M."/>
            <person name="Nishi T."/>
            <person name="Shibahara T."/>
            <person name="Tanaka T."/>
            <person name="Ishii S."/>
            <person name="Yamamoto J."/>
            <person name="Saito K."/>
            <person name="Kawai Y."/>
            <person name="Isono Y."/>
            <person name="Nakamura Y."/>
            <person name="Nagahari K."/>
            <person name="Murakami K."/>
            <person name="Yasuda T."/>
            <person name="Iwayanagi T."/>
            <person name="Wagatsuma M."/>
            <person name="Shiratori A."/>
            <person name="Sudo H."/>
            <person name="Hosoiri T."/>
            <person name="Kaku Y."/>
            <person name="Kodaira H."/>
            <person name="Kondo H."/>
            <person name="Sugawara M."/>
            <person name="Takahashi M."/>
            <person name="Kanda K."/>
            <person name="Yokoi T."/>
            <person name="Furuya T."/>
            <person name="Kikkawa E."/>
            <person name="Omura Y."/>
            <person name="Abe K."/>
            <person name="Kamihara K."/>
            <person name="Katsuta N."/>
            <person name="Sato K."/>
            <person name="Tanikawa M."/>
            <person name="Yamazaki M."/>
            <person name="Ninomiya K."/>
            <person name="Ishibashi T."/>
            <person name="Yamashita H."/>
            <person name="Murakawa K."/>
            <person name="Fujimori K."/>
            <person name="Tanai H."/>
            <person name="Kimata M."/>
            <person name="Watanabe M."/>
            <person name="Hiraoka S."/>
            <person name="Chiba Y."/>
            <person name="Ishida S."/>
            <person name="Ono Y."/>
            <person name="Takiguchi S."/>
            <person name="Watanabe S."/>
            <person name="Yosida M."/>
            <person name="Hotuta T."/>
            <person name="Kusano J."/>
            <person name="Kanehori K."/>
            <person name="Takahashi-Fujii A."/>
            <person name="Hara H."/>
            <person name="Tanase T.-O."/>
            <person name="Nomura Y."/>
            <person name="Togiya S."/>
            <person name="Komai F."/>
            <person name="Hara R."/>
            <person name="Takeuchi K."/>
            <person name="Arita M."/>
            <person name="Imose N."/>
            <person name="Musashino K."/>
            <person name="Yuuki H."/>
            <person name="Oshima A."/>
            <person name="Sasaki N."/>
            <person name="Aotsuka S."/>
            <person name="Yoshikawa Y."/>
            <person name="Matsunawa H."/>
            <person name="Ichihara T."/>
            <person name="Shiohata N."/>
            <person name="Sano S."/>
            <person name="Moriya S."/>
            <person name="Momiyama H."/>
            <person name="Satoh N."/>
            <person name="Takami S."/>
            <person name="Terashima Y."/>
            <person name="Suzuki O."/>
            <person name="Nakagawa S."/>
            <person name="Senoh A."/>
            <person name="Mizoguchi H."/>
            <person name="Goto Y."/>
            <person name="Shimizu F."/>
            <person name="Wakebe H."/>
            <person name="Hishigaki H."/>
            <person name="Watanabe T."/>
            <person name="Sugiyama A."/>
            <person name="Takemoto M."/>
            <person name="Kawakami B."/>
            <person name="Yamazaki M."/>
            <person name="Watanabe K."/>
            <person name="Kumagai A."/>
            <person name="Itakura S."/>
            <person name="Fukuzumi Y."/>
            <person name="Fujimori Y."/>
            <person name="Komiyama M."/>
            <person name="Tashiro H."/>
            <person name="Tanigami A."/>
            <person name="Fujiwara T."/>
            <person name="Ono T."/>
            <person name="Yamada K."/>
            <person name="Fujii Y."/>
            <person name="Ozaki K."/>
            <person name="Hirao M."/>
            <person name="Ohmori Y."/>
            <person name="Kawabata A."/>
            <person name="Hikiji T."/>
            <person name="Kobatake N."/>
            <person name="Inagaki H."/>
            <person name="Ikema Y."/>
            <person name="Okamoto S."/>
            <person name="Okitani R."/>
            <person name="Kawakami T."/>
            <person name="Noguchi S."/>
            <person name="Itoh T."/>
            <person name="Shigeta K."/>
            <person name="Senba T."/>
            <person name="Matsumura K."/>
            <person name="Nakajima Y."/>
            <person name="Mizuno T."/>
            <person name="Morinaga M."/>
            <person name="Sasaki M."/>
            <person name="Togashi T."/>
            <person name="Oyama M."/>
            <person name="Hata H."/>
            <person name="Watanabe M."/>
            <person name="Komatsu T."/>
            <person name="Mizushima-Sugano J."/>
            <person name="Satoh T."/>
            <person name="Shirai Y."/>
            <person name="Takahashi Y."/>
            <person name="Nakagawa K."/>
            <person name="Okumura K."/>
            <person name="Nagase T."/>
            <person name="Nomura N."/>
            <person name="Kikuchi H."/>
            <person name="Masuho Y."/>
            <person name="Yamashita R."/>
            <person name="Nakai K."/>
            <person name="Yada T."/>
            <person name="Nakamura Y."/>
            <person name="Ohara O."/>
            <person name="Isogai T."/>
            <person name="Sugano S."/>
        </authorList>
    </citation>
    <scope>NUCLEOTIDE SEQUENCE [LARGE SCALE MRNA] (ISOFORM 4)</scope>
    <scope>VARIANT MET-523</scope>
    <source>
        <tissue>Thymus</tissue>
    </source>
</reference>
<reference key="5">
    <citation type="journal article" date="2006" name="Nature">
        <title>The finished DNA sequence of human chromosome 12.</title>
        <authorList>
            <person name="Scherer S.E."/>
            <person name="Muzny D.M."/>
            <person name="Buhay C.J."/>
            <person name="Chen R."/>
            <person name="Cree A."/>
            <person name="Ding Y."/>
            <person name="Dugan-Rocha S."/>
            <person name="Gill R."/>
            <person name="Gunaratne P."/>
            <person name="Harris R.A."/>
            <person name="Hawes A.C."/>
            <person name="Hernandez J."/>
            <person name="Hodgson A.V."/>
            <person name="Hume J."/>
            <person name="Jackson A."/>
            <person name="Khan Z.M."/>
            <person name="Kovar-Smith C."/>
            <person name="Lewis L.R."/>
            <person name="Lozado R.J."/>
            <person name="Metzker M.L."/>
            <person name="Milosavljevic A."/>
            <person name="Miner G.R."/>
            <person name="Montgomery K.T."/>
            <person name="Morgan M.B."/>
            <person name="Nazareth L.V."/>
            <person name="Scott G."/>
            <person name="Sodergren E."/>
            <person name="Song X.-Z."/>
            <person name="Steffen D."/>
            <person name="Lovering R.C."/>
            <person name="Wheeler D.A."/>
            <person name="Worley K.C."/>
            <person name="Yuan Y."/>
            <person name="Zhang Z."/>
            <person name="Adams C.Q."/>
            <person name="Ansari-Lari M.A."/>
            <person name="Ayele M."/>
            <person name="Brown M.J."/>
            <person name="Chen G."/>
            <person name="Chen Z."/>
            <person name="Clerc-Blankenburg K.P."/>
            <person name="Davis C."/>
            <person name="Delgado O."/>
            <person name="Dinh H.H."/>
            <person name="Draper H."/>
            <person name="Gonzalez-Garay M.L."/>
            <person name="Havlak P."/>
            <person name="Jackson L.R."/>
            <person name="Jacob L.S."/>
            <person name="Kelly S.H."/>
            <person name="Li L."/>
            <person name="Li Z."/>
            <person name="Liu J."/>
            <person name="Liu W."/>
            <person name="Lu J."/>
            <person name="Maheshwari M."/>
            <person name="Nguyen B.-V."/>
            <person name="Okwuonu G.O."/>
            <person name="Pasternak S."/>
            <person name="Perez L.M."/>
            <person name="Plopper F.J.H."/>
            <person name="Santibanez J."/>
            <person name="Shen H."/>
            <person name="Tabor P.E."/>
            <person name="Verduzco D."/>
            <person name="Waldron L."/>
            <person name="Wang Q."/>
            <person name="Williams G.A."/>
            <person name="Zhang J."/>
            <person name="Zhou J."/>
            <person name="Allen C.C."/>
            <person name="Amin A.G."/>
            <person name="Anyalebechi V."/>
            <person name="Bailey M."/>
            <person name="Barbaria J.A."/>
            <person name="Bimage K.E."/>
            <person name="Bryant N.P."/>
            <person name="Burch P.E."/>
            <person name="Burkett C.E."/>
            <person name="Burrell K.L."/>
            <person name="Calderon E."/>
            <person name="Cardenas V."/>
            <person name="Carter K."/>
            <person name="Casias K."/>
            <person name="Cavazos I."/>
            <person name="Cavazos S.R."/>
            <person name="Ceasar H."/>
            <person name="Chacko J."/>
            <person name="Chan S.N."/>
            <person name="Chavez D."/>
            <person name="Christopoulos C."/>
            <person name="Chu J."/>
            <person name="Cockrell R."/>
            <person name="Cox C.D."/>
            <person name="Dang M."/>
            <person name="Dathorne S.R."/>
            <person name="David R."/>
            <person name="Davis C.M."/>
            <person name="Davy-Carroll L."/>
            <person name="Deshazo D.R."/>
            <person name="Donlin J.E."/>
            <person name="D'Souza L."/>
            <person name="Eaves K.A."/>
            <person name="Egan A."/>
            <person name="Emery-Cohen A.J."/>
            <person name="Escotto M."/>
            <person name="Flagg N."/>
            <person name="Forbes L.D."/>
            <person name="Gabisi A.M."/>
            <person name="Garza M."/>
            <person name="Hamilton C."/>
            <person name="Henderson N."/>
            <person name="Hernandez O."/>
            <person name="Hines S."/>
            <person name="Hogues M.E."/>
            <person name="Huang M."/>
            <person name="Idlebird D.G."/>
            <person name="Johnson R."/>
            <person name="Jolivet A."/>
            <person name="Jones S."/>
            <person name="Kagan R."/>
            <person name="King L.M."/>
            <person name="Leal B."/>
            <person name="Lebow H."/>
            <person name="Lee S."/>
            <person name="LeVan J.M."/>
            <person name="Lewis L.C."/>
            <person name="London P."/>
            <person name="Lorensuhewa L.M."/>
            <person name="Loulseged H."/>
            <person name="Lovett D.A."/>
            <person name="Lucier A."/>
            <person name="Lucier R.L."/>
            <person name="Ma J."/>
            <person name="Madu R.C."/>
            <person name="Mapua P."/>
            <person name="Martindale A.D."/>
            <person name="Martinez E."/>
            <person name="Massey E."/>
            <person name="Mawhiney S."/>
            <person name="Meador M.G."/>
            <person name="Mendez S."/>
            <person name="Mercado C."/>
            <person name="Mercado I.C."/>
            <person name="Merritt C.E."/>
            <person name="Miner Z.L."/>
            <person name="Minja E."/>
            <person name="Mitchell T."/>
            <person name="Mohabbat F."/>
            <person name="Mohabbat K."/>
            <person name="Montgomery B."/>
            <person name="Moore N."/>
            <person name="Morris S."/>
            <person name="Munidasa M."/>
            <person name="Ngo R.N."/>
            <person name="Nguyen N.B."/>
            <person name="Nickerson E."/>
            <person name="Nwaokelemeh O.O."/>
            <person name="Nwokenkwo S."/>
            <person name="Obregon M."/>
            <person name="Oguh M."/>
            <person name="Oragunye N."/>
            <person name="Oviedo R.J."/>
            <person name="Parish B.J."/>
            <person name="Parker D.N."/>
            <person name="Parrish J."/>
            <person name="Parks K.L."/>
            <person name="Paul H.A."/>
            <person name="Payton B.A."/>
            <person name="Perez A."/>
            <person name="Perrin W."/>
            <person name="Pickens A."/>
            <person name="Primus E.L."/>
            <person name="Pu L.-L."/>
            <person name="Puazo M."/>
            <person name="Quiles M.M."/>
            <person name="Quiroz J.B."/>
            <person name="Rabata D."/>
            <person name="Reeves K."/>
            <person name="Ruiz S.J."/>
            <person name="Shao H."/>
            <person name="Sisson I."/>
            <person name="Sonaike T."/>
            <person name="Sorelle R.P."/>
            <person name="Sutton A.E."/>
            <person name="Svatek A.F."/>
            <person name="Svetz L.A."/>
            <person name="Tamerisa K.S."/>
            <person name="Taylor T.R."/>
            <person name="Teague B."/>
            <person name="Thomas N."/>
            <person name="Thorn R.D."/>
            <person name="Trejos Z.Y."/>
            <person name="Trevino B.K."/>
            <person name="Ukegbu O.N."/>
            <person name="Urban J.B."/>
            <person name="Vasquez L.I."/>
            <person name="Vera V.A."/>
            <person name="Villasana D.M."/>
            <person name="Wang L."/>
            <person name="Ward-Moore S."/>
            <person name="Warren J.T."/>
            <person name="Wei X."/>
            <person name="White F."/>
            <person name="Williamson A.L."/>
            <person name="Wleczyk R."/>
            <person name="Wooden H.S."/>
            <person name="Wooden S.H."/>
            <person name="Yen J."/>
            <person name="Yoon L."/>
            <person name="Yoon V."/>
            <person name="Zorrilla S.E."/>
            <person name="Nelson D."/>
            <person name="Kucherlapati R."/>
            <person name="Weinstock G."/>
            <person name="Gibbs R.A."/>
        </authorList>
    </citation>
    <scope>NUCLEOTIDE SEQUENCE [LARGE SCALE GENOMIC DNA]</scope>
</reference>
<reference key="6">
    <citation type="journal article" date="2004" name="Genome Res.">
        <title>The status, quality, and expansion of the NIH full-length cDNA project: the Mammalian Gene Collection (MGC).</title>
        <authorList>
            <consortium name="The MGC Project Team"/>
        </authorList>
    </citation>
    <scope>NUCLEOTIDE SEQUENCE [LARGE SCALE MRNA] (ISOFORM 1)</scope>
    <scope>VARIANT MET-523</scope>
    <source>
        <tissue>Heart</tissue>
        <tissue>Lung</tissue>
    </source>
</reference>
<reference key="7">
    <citation type="journal article" date="2004" name="Protein Sci.">
        <title>Signal peptide prediction based on analysis of experimentally verified cleavage sites.</title>
        <authorList>
            <person name="Zhang Z."/>
            <person name="Henzel W.J."/>
        </authorList>
    </citation>
    <scope>PROTEIN SEQUENCE OF 41-55</scope>
</reference>
<reference key="8">
    <citation type="journal article" date="2009" name="J. Proteome Res.">
        <title>Glycoproteomics analysis of human liver tissue by combination of multiple enzyme digestion and hydrazide chemistry.</title>
        <authorList>
            <person name="Chen R."/>
            <person name="Jiang X."/>
            <person name="Sun D."/>
            <person name="Han G."/>
            <person name="Wang F."/>
            <person name="Ye M."/>
            <person name="Wang L."/>
            <person name="Zou H."/>
        </authorList>
    </citation>
    <scope>GLYCOSYLATION [LARGE SCALE ANALYSIS] AT ASN-1161</scope>
    <source>
        <tissue>Liver</tissue>
    </source>
</reference>
<dbReference type="EMBL" id="AF264014">
    <property type="protein sequence ID" value="AAF91396.1"/>
    <property type="molecule type" value="mRNA"/>
</dbReference>
<dbReference type="EMBL" id="GQ397482">
    <property type="protein sequence ID" value="ADB45259.1"/>
    <property type="molecule type" value="mRNA"/>
</dbReference>
<dbReference type="EMBL" id="AY358856">
    <property type="protein sequence ID" value="AAQ89215.1"/>
    <property type="molecule type" value="mRNA"/>
</dbReference>
<dbReference type="EMBL" id="AK303372">
    <property type="protein sequence ID" value="BAG64429.1"/>
    <property type="molecule type" value="mRNA"/>
</dbReference>
<dbReference type="EMBL" id="AC131205">
    <property type="status" value="NOT_ANNOTATED_CDS"/>
    <property type="molecule type" value="Genomic_DNA"/>
</dbReference>
<dbReference type="EMBL" id="AC131206">
    <property type="status" value="NOT_ANNOTATED_CDS"/>
    <property type="molecule type" value="Genomic_DNA"/>
</dbReference>
<dbReference type="EMBL" id="AC131207">
    <property type="status" value="NOT_ANNOTATED_CDS"/>
    <property type="molecule type" value="Genomic_DNA"/>
</dbReference>
<dbReference type="EMBL" id="BC104962">
    <property type="protein sequence ID" value="AAI04963.1"/>
    <property type="molecule type" value="mRNA"/>
</dbReference>
<dbReference type="EMBL" id="BC104964">
    <property type="protein sequence ID" value="AAI04965.1"/>
    <property type="molecule type" value="mRNA"/>
</dbReference>
<dbReference type="CCDS" id="CCDS73434.1">
    <molecule id="Q9NR16-4"/>
</dbReference>
<dbReference type="CCDS" id="CCDS8577.1">
    <molecule id="Q9NR16-1"/>
</dbReference>
<dbReference type="RefSeq" id="NP_001284579.2">
    <molecule id="Q9NR16-4"/>
    <property type="nucleotide sequence ID" value="NM_001297650.2"/>
</dbReference>
<dbReference type="RefSeq" id="NP_777601.3">
    <molecule id="Q9NR16-1"/>
    <property type="nucleotide sequence ID" value="NM_174941.6"/>
</dbReference>
<dbReference type="RefSeq" id="XP_011518918.1">
    <molecule id="Q9NR16-2"/>
    <property type="nucleotide sequence ID" value="XM_011520616.2"/>
</dbReference>
<dbReference type="PDB" id="6K0O">
    <property type="method" value="X-ray"/>
    <property type="resolution" value="1.99 A"/>
    <property type="chains" value="A/B=795-895"/>
</dbReference>
<dbReference type="PDBsum" id="6K0O"/>
<dbReference type="SMR" id="Q9NR16"/>
<dbReference type="BioGRID" id="129525">
    <property type="interactions" value="1"/>
</dbReference>
<dbReference type="FunCoup" id="Q9NR16">
    <property type="interactions" value="48"/>
</dbReference>
<dbReference type="STRING" id="9606.ENSP00000393474"/>
<dbReference type="GlyCosmos" id="Q9NR16">
    <property type="glycosylation" value="17 sites, No reported glycans"/>
</dbReference>
<dbReference type="GlyGen" id="Q9NR16">
    <property type="glycosylation" value="17 sites"/>
</dbReference>
<dbReference type="iPTMnet" id="Q9NR16"/>
<dbReference type="PhosphoSitePlus" id="Q9NR16"/>
<dbReference type="BioMuta" id="CD163L1"/>
<dbReference type="DMDM" id="296434413"/>
<dbReference type="jPOST" id="Q9NR16"/>
<dbReference type="MassIVE" id="Q9NR16"/>
<dbReference type="PaxDb" id="9606-ENSP00000393474"/>
<dbReference type="PeptideAtlas" id="Q9NR16"/>
<dbReference type="ProteomicsDB" id="18658"/>
<dbReference type="ProteomicsDB" id="82250">
    <molecule id="Q9NR16-1"/>
</dbReference>
<dbReference type="ProteomicsDB" id="82251">
    <molecule id="Q9NR16-2"/>
</dbReference>
<dbReference type="ProteomicsDB" id="82252">
    <molecule id="Q9NR16-3"/>
</dbReference>
<dbReference type="Antibodypedia" id="3051">
    <property type="antibodies" value="140 antibodies from 22 providers"/>
</dbReference>
<dbReference type="DNASU" id="283316"/>
<dbReference type="Ensembl" id="ENST00000313599.8">
    <molecule id="Q9NR16-1"/>
    <property type="protein sequence ID" value="ENSP00000315945.3"/>
    <property type="gene ID" value="ENSG00000177675.9"/>
</dbReference>
<dbReference type="Ensembl" id="ENST00000416109.2">
    <molecule id="Q9NR16-4"/>
    <property type="protein sequence ID" value="ENSP00000393474.2"/>
    <property type="gene ID" value="ENSG00000177675.9"/>
</dbReference>
<dbReference type="GeneID" id="283316"/>
<dbReference type="KEGG" id="hsa:283316"/>
<dbReference type="MANE-Select" id="ENST00000313599.8">
    <property type="protein sequence ID" value="ENSP00000315945.3"/>
    <property type="RefSeq nucleotide sequence ID" value="NM_174941.6"/>
    <property type="RefSeq protein sequence ID" value="NP_777601.3"/>
</dbReference>
<dbReference type="UCSC" id="uc001qsy.4">
    <molecule id="Q9NR16-1"/>
    <property type="organism name" value="human"/>
</dbReference>
<dbReference type="AGR" id="HGNC:30375"/>
<dbReference type="CTD" id="283316"/>
<dbReference type="DisGeNET" id="283316"/>
<dbReference type="GeneCards" id="CD163L1"/>
<dbReference type="HGNC" id="HGNC:30375">
    <property type="gene designation" value="CD163L1"/>
</dbReference>
<dbReference type="HPA" id="ENSG00000177675">
    <property type="expression patterns" value="Tissue enhanced (intestine, lymphoid tissue)"/>
</dbReference>
<dbReference type="MIM" id="606079">
    <property type="type" value="gene"/>
</dbReference>
<dbReference type="neXtProt" id="NX_Q9NR16"/>
<dbReference type="OpenTargets" id="ENSG00000177675"/>
<dbReference type="PharmGKB" id="PA142672145"/>
<dbReference type="VEuPathDB" id="HostDB:ENSG00000177675"/>
<dbReference type="eggNOG" id="ENOG502QQ5W">
    <property type="taxonomic scope" value="Eukaryota"/>
</dbReference>
<dbReference type="GeneTree" id="ENSGT00940000164229"/>
<dbReference type="HOGENOM" id="CLU_002555_0_0_1"/>
<dbReference type="InParanoid" id="Q9NR16"/>
<dbReference type="OMA" id="VCANNQW"/>
<dbReference type="OrthoDB" id="536948at2759"/>
<dbReference type="PAN-GO" id="Q9NR16">
    <property type="GO annotations" value="1 GO annotation based on evolutionary models"/>
</dbReference>
<dbReference type="PhylomeDB" id="Q9NR16"/>
<dbReference type="TreeFam" id="TF329295"/>
<dbReference type="PathwayCommons" id="Q9NR16"/>
<dbReference type="BioGRID-ORCS" id="283316">
    <property type="hits" value="13 hits in 1138 CRISPR screens"/>
</dbReference>
<dbReference type="ChiTaRS" id="CD163L1">
    <property type="organism name" value="human"/>
</dbReference>
<dbReference type="GenomeRNAi" id="283316"/>
<dbReference type="Pharos" id="Q9NR16">
    <property type="development level" value="Tbio"/>
</dbReference>
<dbReference type="PRO" id="PR:Q9NR16"/>
<dbReference type="Proteomes" id="UP000005640">
    <property type="component" value="Chromosome 12"/>
</dbReference>
<dbReference type="RNAct" id="Q9NR16">
    <property type="molecule type" value="protein"/>
</dbReference>
<dbReference type="Bgee" id="ENSG00000177675">
    <property type="expression patterns" value="Expressed in rectum and 110 other cell types or tissues"/>
</dbReference>
<dbReference type="ExpressionAtlas" id="Q9NR16">
    <property type="expression patterns" value="baseline and differential"/>
</dbReference>
<dbReference type="GO" id="GO:0009897">
    <property type="term" value="C:external side of plasma membrane"/>
    <property type="evidence" value="ECO:0000318"/>
    <property type="project" value="GO_Central"/>
</dbReference>
<dbReference type="GO" id="GO:0005576">
    <property type="term" value="C:extracellular region"/>
    <property type="evidence" value="ECO:0007669"/>
    <property type="project" value="UniProtKB-SubCell"/>
</dbReference>
<dbReference type="FunFam" id="3.10.250.10:FF:000012">
    <property type="entry name" value="CD163 molecule like 1"/>
    <property type="match status" value="1"/>
</dbReference>
<dbReference type="FunFam" id="3.10.250.10:FF:000013">
    <property type="entry name" value="CD163 molecule like 1"/>
    <property type="match status" value="2"/>
</dbReference>
<dbReference type="FunFam" id="3.10.250.10:FF:000036">
    <property type="entry name" value="CD163 molecule like 1"/>
    <property type="match status" value="1"/>
</dbReference>
<dbReference type="FunFam" id="3.10.250.10:FF:000005">
    <property type="entry name" value="Neurotrypsin isoform A"/>
    <property type="match status" value="1"/>
</dbReference>
<dbReference type="FunFam" id="3.10.250.10:FF:000006">
    <property type="entry name" value="neurotrypsin isoform X2"/>
    <property type="match status" value="4"/>
</dbReference>
<dbReference type="FunFam" id="3.10.250.10:FF:000002">
    <property type="entry name" value="Scavenger receptor cysteine-rich type 1 protein M130"/>
    <property type="match status" value="1"/>
</dbReference>
<dbReference type="FunFam" id="3.10.250.10:FF:000004">
    <property type="entry name" value="Scavenger receptor cysteine-rich type 1 protein M130"/>
    <property type="match status" value="1"/>
</dbReference>
<dbReference type="FunFam" id="3.10.250.10:FF:000009">
    <property type="entry name" value="WC1"/>
    <property type="match status" value="1"/>
</dbReference>
<dbReference type="Gene3D" id="3.10.250.10">
    <property type="entry name" value="SRCR-like domain"/>
    <property type="match status" value="12"/>
</dbReference>
<dbReference type="InterPro" id="IPR001190">
    <property type="entry name" value="SRCR"/>
</dbReference>
<dbReference type="InterPro" id="IPR036772">
    <property type="entry name" value="SRCR-like_dom_sf"/>
</dbReference>
<dbReference type="PANTHER" id="PTHR19331:SF465">
    <property type="entry name" value="EGG PEPTIDE SPERACT RECEPTOR"/>
    <property type="match status" value="1"/>
</dbReference>
<dbReference type="PANTHER" id="PTHR19331">
    <property type="entry name" value="SCAVENGER RECEPTOR DOMAIN-CONTAINING"/>
    <property type="match status" value="1"/>
</dbReference>
<dbReference type="Pfam" id="PF00530">
    <property type="entry name" value="SRCR"/>
    <property type="match status" value="12"/>
</dbReference>
<dbReference type="PRINTS" id="PR00258">
    <property type="entry name" value="SPERACTRCPTR"/>
</dbReference>
<dbReference type="SMART" id="SM00202">
    <property type="entry name" value="SR"/>
    <property type="match status" value="12"/>
</dbReference>
<dbReference type="SUPFAM" id="SSF56487">
    <property type="entry name" value="SRCR-like"/>
    <property type="match status" value="12"/>
</dbReference>
<dbReference type="PROSITE" id="PS00420">
    <property type="entry name" value="SRCR_1"/>
    <property type="match status" value="5"/>
</dbReference>
<dbReference type="PROSITE" id="PS50287">
    <property type="entry name" value="SRCR_2"/>
    <property type="match status" value="12"/>
</dbReference>
<sequence length="1453" mass="159239">MMLPQNSWHIDFGRCCCHQNLFSAVVTCILLLNSCFLISSFNGTDLELRLVNGDGPCSGTVEVKFQGQWGTVCDDGWNTTASTVVCKQLGCPFSFAMFRFGQAVTRHGKIWLDDVSCYGNESALWECQHREWGSHNCYHGEDVGVNCYGEANLGLRLVDGNNSCSGRVEVKFQERWGTICDDGWNLNTAAVVCRQLGCPSSFISSGVVNSPAVLRPIWLDDILCQGNELALWNCRHRGWGNHDCSHNEDVTLTCYDSSDLELRLVGGTNRCMGRVELKIQGRWGTVCHHKWNNAAADVVCKQLGCGTALHFAGLPHLQSGSDVVWLDGVSCSGNESFLWDCRHSGTVNFDCLHQNDVSVICSDGADLELRLADGSNNCSGRVEVRIHEQWWTICDQNWKNEQALVVCKQLGCPFSVFGSRRAKPSNEARDIWINSISCTGNESALWDCTYDGKAKRTCFRRSDAGVICSDKADLDLRLVGAHSPCYGRLEVKYQGEWGTVCHDRWSTRNAAVVCKQLGCGKPLHVFGMTYFKEASGPIWLDDVSCIGNESNIWDCEHSGWGKHNCVHREDVIVTCSGDATWGLRLVGGSNRCSGRLEVYFQGRWGTVCDDGWNSKAAAVVCSQLDCPSSIIGMGLGNASTGYGKIWLDDVSCDGDESDLWSCRNSGWGNNDCSHSEDVGVICSDASDMELRLVGGSSRCAGKVEVNVQGAVGILCANGWGMNIAEVVCRQLECGSAIRVSREPHFTERTLHILMSNSGCTGGEASLWDCIRWEWKQTACHLNMEASLICSAHRQPRLVGADMPCSGRVEVKHADTWRSVCDSDFSLHAANVLCRELNCGDAISLSVGDHFGKGNGLTWAEKFQCEGSETHLALCPIVQHPEDTCIHSREVGVVCSRYTDVRLVNGKSQCDGQVEINVLGHWGSLCDTHWDPEDARVLCRQLSCGTALSTTGGKYIGERSVRVWGHRFHCLGNESLLDNCQMTVLGAPPCIHGNTVSVICTGSLTQPLFPCLANVSDPYLSAVPEGSALICLEDKRLRLVDGDSRCAGRVEIYHDGFWGTICDDGWDLSDAHVVCQKLGCGVAFNATVSAHFGEGSGPIWLDDLNCTGMESHLWQCPSRGWGQHDCRHKEDAGVICSEFTALRLYSETETESCAGRLEVFYNGTWGSVGRRNITTAIAGIVCRQLGCGENGVVSLAPLSKTGSGFMWVDDIQCPKTHISIWQCLSAPWERRISSPAEETWITCEDRIRVRGGDTECSGRVEIWHAGSWGTVCDDSWDLAEAEVVCQQLGCGSALAALRDASFGQGTGTIWLDDMRCKGNESFLWDCHAKPWGQSDCGHKEDAGVRCSGQSLKSLNASSGHLALILSSIFGLLLLVLFILFLTWCRVQKQKHLPLRVSTRRRGSLEENLFHEMETCLKREDPHGTRTSDDTPNHGCEDASDTSLLGVLPASEATK</sequence>